<feature type="chain" id="PRO_1000017068" description="tRNA pseudouridine synthase A">
    <location>
        <begin position="1"/>
        <end position="258"/>
    </location>
</feature>
<feature type="active site" description="Nucleophile" evidence="1">
    <location>
        <position position="61"/>
    </location>
</feature>
<feature type="binding site" evidence="1">
    <location>
        <position position="119"/>
    </location>
    <ligand>
        <name>substrate</name>
    </ligand>
</feature>
<gene>
    <name evidence="1" type="primary">truA</name>
    <name type="ordered locus">Cpha266_1086</name>
</gene>
<protein>
    <recommendedName>
        <fullName evidence="1">tRNA pseudouridine synthase A</fullName>
        <ecNumber evidence="1">5.4.99.12</ecNumber>
    </recommendedName>
    <alternativeName>
        <fullName evidence="1">tRNA pseudouridine(38-40) synthase</fullName>
    </alternativeName>
    <alternativeName>
        <fullName evidence="1">tRNA pseudouridylate synthase I</fullName>
    </alternativeName>
    <alternativeName>
        <fullName evidence="1">tRNA-uridine isomerase I</fullName>
    </alternativeName>
</protein>
<proteinExistence type="inferred from homology"/>
<keyword id="KW-0413">Isomerase</keyword>
<keyword id="KW-1185">Reference proteome</keyword>
<keyword id="KW-0819">tRNA processing</keyword>
<name>TRUA_CHLPD</name>
<comment type="function">
    <text evidence="1">Formation of pseudouridine at positions 38, 39 and 40 in the anticodon stem and loop of transfer RNAs.</text>
</comment>
<comment type="catalytic activity">
    <reaction evidence="1">
        <text>uridine(38/39/40) in tRNA = pseudouridine(38/39/40) in tRNA</text>
        <dbReference type="Rhea" id="RHEA:22376"/>
        <dbReference type="Rhea" id="RHEA-COMP:10085"/>
        <dbReference type="Rhea" id="RHEA-COMP:10087"/>
        <dbReference type="ChEBI" id="CHEBI:65314"/>
        <dbReference type="ChEBI" id="CHEBI:65315"/>
        <dbReference type="EC" id="5.4.99.12"/>
    </reaction>
</comment>
<comment type="subunit">
    <text evidence="1">Homodimer.</text>
</comment>
<comment type="similarity">
    <text evidence="1">Belongs to the tRNA pseudouridine synthase TruA family.</text>
</comment>
<dbReference type="EC" id="5.4.99.12" evidence="1"/>
<dbReference type="EMBL" id="CP000492">
    <property type="protein sequence ID" value="ABL65127.1"/>
    <property type="molecule type" value="Genomic_DNA"/>
</dbReference>
<dbReference type="RefSeq" id="WP_011744953.1">
    <property type="nucleotide sequence ID" value="NC_008639.1"/>
</dbReference>
<dbReference type="SMR" id="A1BFF0"/>
<dbReference type="STRING" id="290317.Cpha266_1086"/>
<dbReference type="KEGG" id="cph:Cpha266_1086"/>
<dbReference type="eggNOG" id="COG0101">
    <property type="taxonomic scope" value="Bacteria"/>
</dbReference>
<dbReference type="HOGENOM" id="CLU_014673_0_1_10"/>
<dbReference type="OrthoDB" id="9811823at2"/>
<dbReference type="Proteomes" id="UP000008701">
    <property type="component" value="Chromosome"/>
</dbReference>
<dbReference type="GO" id="GO:0003723">
    <property type="term" value="F:RNA binding"/>
    <property type="evidence" value="ECO:0007669"/>
    <property type="project" value="InterPro"/>
</dbReference>
<dbReference type="GO" id="GO:0160147">
    <property type="term" value="F:tRNA pseudouridine(38-40) synthase activity"/>
    <property type="evidence" value="ECO:0007669"/>
    <property type="project" value="UniProtKB-EC"/>
</dbReference>
<dbReference type="GO" id="GO:0031119">
    <property type="term" value="P:tRNA pseudouridine synthesis"/>
    <property type="evidence" value="ECO:0007669"/>
    <property type="project" value="UniProtKB-UniRule"/>
</dbReference>
<dbReference type="CDD" id="cd02570">
    <property type="entry name" value="PseudoU_synth_EcTruA"/>
    <property type="match status" value="1"/>
</dbReference>
<dbReference type="FunFam" id="3.30.70.580:FF:000001">
    <property type="entry name" value="tRNA pseudouridine synthase A"/>
    <property type="match status" value="1"/>
</dbReference>
<dbReference type="Gene3D" id="3.30.70.660">
    <property type="entry name" value="Pseudouridine synthase I, catalytic domain, C-terminal subdomain"/>
    <property type="match status" value="1"/>
</dbReference>
<dbReference type="Gene3D" id="3.30.70.580">
    <property type="entry name" value="Pseudouridine synthase I, catalytic domain, N-terminal subdomain"/>
    <property type="match status" value="1"/>
</dbReference>
<dbReference type="HAMAP" id="MF_00171">
    <property type="entry name" value="TruA"/>
    <property type="match status" value="1"/>
</dbReference>
<dbReference type="InterPro" id="IPR020103">
    <property type="entry name" value="PsdUridine_synth_cat_dom_sf"/>
</dbReference>
<dbReference type="InterPro" id="IPR001406">
    <property type="entry name" value="PsdUridine_synth_TruA"/>
</dbReference>
<dbReference type="InterPro" id="IPR020097">
    <property type="entry name" value="PsdUridine_synth_TruA_a/b_dom"/>
</dbReference>
<dbReference type="InterPro" id="IPR020095">
    <property type="entry name" value="PsdUridine_synth_TruA_C"/>
</dbReference>
<dbReference type="InterPro" id="IPR020094">
    <property type="entry name" value="TruA/RsuA/RluB/E/F_N"/>
</dbReference>
<dbReference type="NCBIfam" id="TIGR00071">
    <property type="entry name" value="hisT_truA"/>
    <property type="match status" value="1"/>
</dbReference>
<dbReference type="PANTHER" id="PTHR11142">
    <property type="entry name" value="PSEUDOURIDYLATE SYNTHASE"/>
    <property type="match status" value="1"/>
</dbReference>
<dbReference type="PANTHER" id="PTHR11142:SF0">
    <property type="entry name" value="TRNA PSEUDOURIDINE SYNTHASE-LIKE 1"/>
    <property type="match status" value="1"/>
</dbReference>
<dbReference type="Pfam" id="PF01416">
    <property type="entry name" value="PseudoU_synth_1"/>
    <property type="match status" value="2"/>
</dbReference>
<dbReference type="PIRSF" id="PIRSF001430">
    <property type="entry name" value="tRNA_psdUrid_synth"/>
    <property type="match status" value="1"/>
</dbReference>
<dbReference type="SUPFAM" id="SSF55120">
    <property type="entry name" value="Pseudouridine synthase"/>
    <property type="match status" value="1"/>
</dbReference>
<accession>A1BFF0</accession>
<evidence type="ECO:0000255" key="1">
    <source>
        <dbReference type="HAMAP-Rule" id="MF_00171"/>
    </source>
</evidence>
<organism>
    <name type="scientific">Chlorobium phaeobacteroides (strain DSM 266 / SMG 266 / 2430)</name>
    <dbReference type="NCBI Taxonomy" id="290317"/>
    <lineage>
        <taxon>Bacteria</taxon>
        <taxon>Pseudomonadati</taxon>
        <taxon>Chlorobiota</taxon>
        <taxon>Chlorobiia</taxon>
        <taxon>Chlorobiales</taxon>
        <taxon>Chlorobiaceae</taxon>
        <taxon>Chlorobium/Pelodictyon group</taxon>
        <taxon>Chlorobium</taxon>
    </lineage>
</organism>
<reference key="1">
    <citation type="submission" date="2006-12" db="EMBL/GenBank/DDBJ databases">
        <title>Complete sequence of Chlorobium phaeobacteroides DSM 266.</title>
        <authorList>
            <consortium name="US DOE Joint Genome Institute"/>
            <person name="Copeland A."/>
            <person name="Lucas S."/>
            <person name="Lapidus A."/>
            <person name="Barry K."/>
            <person name="Detter J.C."/>
            <person name="Glavina del Rio T."/>
            <person name="Hammon N."/>
            <person name="Israni S."/>
            <person name="Pitluck S."/>
            <person name="Goltsman E."/>
            <person name="Schmutz J."/>
            <person name="Larimer F."/>
            <person name="Land M."/>
            <person name="Hauser L."/>
            <person name="Mikhailova N."/>
            <person name="Li T."/>
            <person name="Overmann J."/>
            <person name="Bryant D.A."/>
            <person name="Richardson P."/>
        </authorList>
    </citation>
    <scope>NUCLEOTIDE SEQUENCE [LARGE SCALE GENOMIC DNA]</scope>
    <source>
        <strain>DSM 266 / SMG 266 / 2430</strain>
    </source>
</reference>
<sequence length="258" mass="29236">MLAKDFLFMKNIRITIEYDGTGYAGWQRQAGSFCTVQGEIERILSQILQEDIRLAGAGRTDKGVHARAQIATFKSRSSLGPDRMVHSMNALLPNTIRISDPLVVPEGFHARHSAKEREYRYFVREEPSAVLGRFSGCSYGSLDLMSMNRVASYVLGEHDFSVFSKETRDRTGCLCRVISCKWFRQREFFVLRISANRFLRSMVRYLAALMIDSGKGLLSPEEAREMIESGILTRQLVPAAPNGLFLWKITYGSDSHSF</sequence>